<organism>
    <name type="scientific">Schizosaccharomyces pombe (strain 972 / ATCC 24843)</name>
    <name type="common">Fission yeast</name>
    <dbReference type="NCBI Taxonomy" id="284812"/>
    <lineage>
        <taxon>Eukaryota</taxon>
        <taxon>Fungi</taxon>
        <taxon>Dikarya</taxon>
        <taxon>Ascomycota</taxon>
        <taxon>Taphrinomycotina</taxon>
        <taxon>Schizosaccharomycetes</taxon>
        <taxon>Schizosaccharomycetales</taxon>
        <taxon>Schizosaccharomycetaceae</taxon>
        <taxon>Schizosaccharomyces</taxon>
    </lineage>
</organism>
<reference key="1">
    <citation type="journal article" date="2002" name="Nature">
        <title>The genome sequence of Schizosaccharomyces pombe.</title>
        <authorList>
            <person name="Wood V."/>
            <person name="Gwilliam R."/>
            <person name="Rajandream M.A."/>
            <person name="Lyne M.H."/>
            <person name="Lyne R."/>
            <person name="Stewart A."/>
            <person name="Sgouros J.G."/>
            <person name="Peat N."/>
            <person name="Hayles J."/>
            <person name="Baker S.G."/>
            <person name="Basham D."/>
            <person name="Bowman S."/>
            <person name="Brooks K."/>
            <person name="Brown D."/>
            <person name="Brown S."/>
            <person name="Chillingworth T."/>
            <person name="Churcher C.M."/>
            <person name="Collins M."/>
            <person name="Connor R."/>
            <person name="Cronin A."/>
            <person name="Davis P."/>
            <person name="Feltwell T."/>
            <person name="Fraser A."/>
            <person name="Gentles S."/>
            <person name="Goble A."/>
            <person name="Hamlin N."/>
            <person name="Harris D.E."/>
            <person name="Hidalgo J."/>
            <person name="Hodgson G."/>
            <person name="Holroyd S."/>
            <person name="Hornsby T."/>
            <person name="Howarth S."/>
            <person name="Huckle E.J."/>
            <person name="Hunt S."/>
            <person name="Jagels K."/>
            <person name="James K.D."/>
            <person name="Jones L."/>
            <person name="Jones M."/>
            <person name="Leather S."/>
            <person name="McDonald S."/>
            <person name="McLean J."/>
            <person name="Mooney P."/>
            <person name="Moule S."/>
            <person name="Mungall K.L."/>
            <person name="Murphy L.D."/>
            <person name="Niblett D."/>
            <person name="Odell C."/>
            <person name="Oliver K."/>
            <person name="O'Neil S."/>
            <person name="Pearson D."/>
            <person name="Quail M.A."/>
            <person name="Rabbinowitsch E."/>
            <person name="Rutherford K.M."/>
            <person name="Rutter S."/>
            <person name="Saunders D."/>
            <person name="Seeger K."/>
            <person name="Sharp S."/>
            <person name="Skelton J."/>
            <person name="Simmonds M.N."/>
            <person name="Squares R."/>
            <person name="Squares S."/>
            <person name="Stevens K."/>
            <person name="Taylor K."/>
            <person name="Taylor R.G."/>
            <person name="Tivey A."/>
            <person name="Walsh S.V."/>
            <person name="Warren T."/>
            <person name="Whitehead S."/>
            <person name="Woodward J.R."/>
            <person name="Volckaert G."/>
            <person name="Aert R."/>
            <person name="Robben J."/>
            <person name="Grymonprez B."/>
            <person name="Weltjens I."/>
            <person name="Vanstreels E."/>
            <person name="Rieger M."/>
            <person name="Schaefer M."/>
            <person name="Mueller-Auer S."/>
            <person name="Gabel C."/>
            <person name="Fuchs M."/>
            <person name="Duesterhoeft A."/>
            <person name="Fritzc C."/>
            <person name="Holzer E."/>
            <person name="Moestl D."/>
            <person name="Hilbert H."/>
            <person name="Borzym K."/>
            <person name="Langer I."/>
            <person name="Beck A."/>
            <person name="Lehrach H."/>
            <person name="Reinhardt R."/>
            <person name="Pohl T.M."/>
            <person name="Eger P."/>
            <person name="Zimmermann W."/>
            <person name="Wedler H."/>
            <person name="Wambutt R."/>
            <person name="Purnelle B."/>
            <person name="Goffeau A."/>
            <person name="Cadieu E."/>
            <person name="Dreano S."/>
            <person name="Gloux S."/>
            <person name="Lelaure V."/>
            <person name="Mottier S."/>
            <person name="Galibert F."/>
            <person name="Aves S.J."/>
            <person name="Xiang Z."/>
            <person name="Hunt C."/>
            <person name="Moore K."/>
            <person name="Hurst S.M."/>
            <person name="Lucas M."/>
            <person name="Rochet M."/>
            <person name="Gaillardin C."/>
            <person name="Tallada V.A."/>
            <person name="Garzon A."/>
            <person name="Thode G."/>
            <person name="Daga R.R."/>
            <person name="Cruzado L."/>
            <person name="Jimenez J."/>
            <person name="Sanchez M."/>
            <person name="del Rey F."/>
            <person name="Benito J."/>
            <person name="Dominguez A."/>
            <person name="Revuelta J.L."/>
            <person name="Moreno S."/>
            <person name="Armstrong J."/>
            <person name="Forsburg S.L."/>
            <person name="Cerutti L."/>
            <person name="Lowe T."/>
            <person name="McCombie W.R."/>
            <person name="Paulsen I."/>
            <person name="Potashkin J."/>
            <person name="Shpakovski G.V."/>
            <person name="Ussery D."/>
            <person name="Barrell B.G."/>
            <person name="Nurse P."/>
        </authorList>
    </citation>
    <scope>NUCLEOTIDE SEQUENCE [LARGE SCALE GENOMIC DNA]</scope>
    <source>
        <strain>972 / ATCC 24843</strain>
    </source>
</reference>
<reference key="2">
    <citation type="journal article" date="2006" name="Nat. Biotechnol.">
        <title>ORFeome cloning and global analysis of protein localization in the fission yeast Schizosaccharomyces pombe.</title>
        <authorList>
            <person name="Matsuyama A."/>
            <person name="Arai R."/>
            <person name="Yashiroda Y."/>
            <person name="Shirai A."/>
            <person name="Kamata A."/>
            <person name="Sekido S."/>
            <person name="Kobayashi Y."/>
            <person name="Hashimoto A."/>
            <person name="Hamamoto M."/>
            <person name="Hiraoka Y."/>
            <person name="Horinouchi S."/>
            <person name="Yoshida M."/>
        </authorList>
    </citation>
    <scope>SUBCELLULAR LOCATION [LARGE SCALE ANALYSIS]</scope>
</reference>
<accession>O42953</accession>
<gene>
    <name type="ORF">SPBC19G7.04</name>
</gene>
<proteinExistence type="predicted"/>
<feature type="chain" id="PRO_0000311770" description="HMG box-containing protein C19G7.04">
    <location>
        <begin position="1"/>
        <end position="362"/>
    </location>
</feature>
<feature type="domain" description="SprT-like">
    <location>
        <begin position="135"/>
        <end position="299"/>
    </location>
</feature>
<feature type="DNA-binding region" description="HMG box">
    <location>
        <begin position="306"/>
        <end position="348"/>
    </location>
</feature>
<keyword id="KW-0963">Cytoplasm</keyword>
<keyword id="KW-0206">Cytoskeleton</keyword>
<keyword id="KW-0238">DNA-binding</keyword>
<keyword id="KW-0539">Nucleus</keyword>
<keyword id="KW-1185">Reference proteome</keyword>
<protein>
    <recommendedName>
        <fullName>HMG box-containing protein C19G7.04</fullName>
    </recommendedName>
</protein>
<name>YGM4_SCHPO</name>
<sequence length="362" mass="41628">MQVSNSMSLNDEEDDIEFINYIPLLASPINSSTCSTSIHDKCPFKQHISENGQNFGSAISSNISQRNFKTLRASHLSQYRDCNRENNTEDKNVISTGIAVNEKYQSVLKLKEKAPQISSAAKRKSFIKERGMLAKCFLARLEDEVFQGRLTSSLEKKEIGIVWSKSFSTTAGRANLKRNNKDAPLGKKTYAYIELSDKVIVTKERLYNTLAHEVCHLACWIIDNEMQNPHGACFKAWGKRIMNNMPYIEITSKHNYDIDFKYKWLCINEKCNKLYGRHSKSINPQKQVCRLCKSQIKQICPKIKQPNAFQIFLKENSKRLRKLHPHITHKELMKKLSDEYHRTKDAKQNVSKSVSLISSSDL</sequence>
<dbReference type="EMBL" id="CU329671">
    <property type="protein sequence ID" value="CAA17058.2"/>
    <property type="molecule type" value="Genomic_DNA"/>
</dbReference>
<dbReference type="PIR" id="T39835">
    <property type="entry name" value="T39835"/>
</dbReference>
<dbReference type="RefSeq" id="NP_595970.1">
    <property type="nucleotide sequence ID" value="NM_001021878.2"/>
</dbReference>
<dbReference type="SMR" id="O42953"/>
<dbReference type="BioGRID" id="277208">
    <property type="interactions" value="25"/>
</dbReference>
<dbReference type="STRING" id="284812.O42953"/>
<dbReference type="PaxDb" id="4896-SPBC19G7.04.1"/>
<dbReference type="EnsemblFungi" id="SPBC19G7.04.1">
    <property type="protein sequence ID" value="SPBC19G7.04.1:pep"/>
    <property type="gene ID" value="SPBC19G7.04"/>
</dbReference>
<dbReference type="KEGG" id="spo:2540683"/>
<dbReference type="PomBase" id="SPBC19G7.04"/>
<dbReference type="VEuPathDB" id="FungiDB:SPBC19G7.04"/>
<dbReference type="eggNOG" id="KOG3854">
    <property type="taxonomic scope" value="Eukaryota"/>
</dbReference>
<dbReference type="HOGENOM" id="CLU_712049_0_0_1"/>
<dbReference type="InParanoid" id="O42953"/>
<dbReference type="PhylomeDB" id="O42953"/>
<dbReference type="PRO" id="PR:O42953"/>
<dbReference type="Proteomes" id="UP000002485">
    <property type="component" value="Chromosome II"/>
</dbReference>
<dbReference type="GO" id="GO:0005737">
    <property type="term" value="C:cytoplasm"/>
    <property type="evidence" value="ECO:0007669"/>
    <property type="project" value="UniProtKB-KW"/>
</dbReference>
<dbReference type="GO" id="GO:0005634">
    <property type="term" value="C:nucleus"/>
    <property type="evidence" value="ECO:0007005"/>
    <property type="project" value="PomBase"/>
</dbReference>
<dbReference type="GO" id="GO:0005819">
    <property type="term" value="C:spindle"/>
    <property type="evidence" value="ECO:0007669"/>
    <property type="project" value="UniProtKB-SubCell"/>
</dbReference>
<dbReference type="GO" id="GO:0003677">
    <property type="term" value="F:DNA binding"/>
    <property type="evidence" value="ECO:0007669"/>
    <property type="project" value="UniProtKB-KW"/>
</dbReference>
<dbReference type="GO" id="GO:0106300">
    <property type="term" value="P:protein-DNA covalent cross-linking repair"/>
    <property type="evidence" value="ECO:0000266"/>
    <property type="project" value="PomBase"/>
</dbReference>
<dbReference type="Gene3D" id="1.10.30.10">
    <property type="entry name" value="High mobility group box domain"/>
    <property type="match status" value="1"/>
</dbReference>
<dbReference type="InterPro" id="IPR009071">
    <property type="entry name" value="HMG_box_dom"/>
</dbReference>
<dbReference type="InterPro" id="IPR036910">
    <property type="entry name" value="HMG_box_dom_sf"/>
</dbReference>
<dbReference type="InterPro" id="IPR006640">
    <property type="entry name" value="SprT-like_domain"/>
</dbReference>
<dbReference type="PANTHER" id="PTHR23099:SF0">
    <property type="entry name" value="GERM CELL NUCLEAR ACIDIC PROTEIN"/>
    <property type="match status" value="1"/>
</dbReference>
<dbReference type="PANTHER" id="PTHR23099">
    <property type="entry name" value="TRANSCRIPTIONAL REGULATOR"/>
    <property type="match status" value="1"/>
</dbReference>
<dbReference type="Pfam" id="PF00505">
    <property type="entry name" value="HMG_box"/>
    <property type="match status" value="1"/>
</dbReference>
<dbReference type="Pfam" id="PF10263">
    <property type="entry name" value="SprT-like"/>
    <property type="match status" value="1"/>
</dbReference>
<dbReference type="SMART" id="SM00731">
    <property type="entry name" value="SprT"/>
    <property type="match status" value="1"/>
</dbReference>
<dbReference type="SUPFAM" id="SSF47095">
    <property type="entry name" value="HMG-box"/>
    <property type="match status" value="1"/>
</dbReference>
<evidence type="ECO:0000269" key="1">
    <source>
    </source>
</evidence>
<comment type="subcellular location">
    <subcellularLocation>
        <location evidence="1">Nucleus</location>
    </subcellularLocation>
    <subcellularLocation>
        <location evidence="1">Cytoplasm</location>
        <location evidence="1">Cytoskeleton</location>
        <location evidence="1">Spindle</location>
    </subcellularLocation>
</comment>